<feature type="chain" id="PRO_0000270175" description="Src kinase-associated phosphoprotein 1">
    <location>
        <begin position="1"/>
        <end position="354"/>
    </location>
</feature>
<feature type="domain" description="PH" evidence="4">
    <location>
        <begin position="107"/>
        <end position="210"/>
    </location>
</feature>
<feature type="domain" description="SH3" evidence="5">
    <location>
        <begin position="289"/>
        <end position="350"/>
    </location>
</feature>
<feature type="region of interest" description="Interaction with FYB1" evidence="1">
    <location>
        <begin position="285"/>
        <end position="290"/>
    </location>
</feature>
<feature type="modified residue" description="Phosphotyrosine" evidence="2">
    <location>
        <position position="142"/>
    </location>
</feature>
<feature type="modified residue" description="Phosphotyrosine" evidence="3">
    <location>
        <position position="236"/>
    </location>
</feature>
<feature type="modified residue" description="Phosphotyrosine; by FYN" evidence="3">
    <location>
        <position position="267"/>
    </location>
</feature>
<feature type="modified residue" description="Phosphotyrosine; by FYN" evidence="1">
    <location>
        <position position="290"/>
    </location>
</feature>
<feature type="sequence conflict" description="In Ref. 1; BAC53665." evidence="8" ref="1">
    <original>I</original>
    <variation>V</variation>
    <location>
        <position position="4"/>
    </location>
</feature>
<dbReference type="EMBL" id="AB092812">
    <property type="protein sequence ID" value="BAC53665.1"/>
    <property type="molecule type" value="mRNA"/>
</dbReference>
<dbReference type="EMBL" id="BC097931">
    <property type="protein sequence ID" value="AAH97931.1"/>
    <property type="molecule type" value="mRNA"/>
</dbReference>
<dbReference type="RefSeq" id="NP_775433.2">
    <property type="nucleotide sequence ID" value="NM_173311.2"/>
</dbReference>
<dbReference type="SMR" id="Q4V7G1"/>
<dbReference type="FunCoup" id="Q4V7G1">
    <property type="interactions" value="575"/>
</dbReference>
<dbReference type="MINT" id="Q4V7G1"/>
<dbReference type="STRING" id="10116.ENSRNOP00000033594"/>
<dbReference type="PhosphoSitePlus" id="Q4V7G1"/>
<dbReference type="PaxDb" id="10116-ENSRNOP00000033594"/>
<dbReference type="Ensembl" id="ENSRNOT00000030159.5">
    <property type="protein sequence ID" value="ENSRNOP00000033594.4"/>
    <property type="gene ID" value="ENSRNOG00000023881.6"/>
</dbReference>
<dbReference type="GeneID" id="286975"/>
<dbReference type="KEGG" id="rno:286975"/>
<dbReference type="UCSC" id="RGD:708436">
    <property type="organism name" value="rat"/>
</dbReference>
<dbReference type="AGR" id="RGD:708436"/>
<dbReference type="CTD" id="8631"/>
<dbReference type="RGD" id="708436">
    <property type="gene designation" value="Skap1"/>
</dbReference>
<dbReference type="eggNOG" id="ENOG502QSSU">
    <property type="taxonomic scope" value="Eukaryota"/>
</dbReference>
<dbReference type="GeneTree" id="ENSGT00390000017856"/>
<dbReference type="HOGENOM" id="CLU_062032_0_0_1"/>
<dbReference type="InParanoid" id="Q4V7G1"/>
<dbReference type="OrthoDB" id="55171at9989"/>
<dbReference type="PhylomeDB" id="Q4V7G1"/>
<dbReference type="TreeFam" id="TF331055"/>
<dbReference type="PRO" id="PR:Q4V7G1"/>
<dbReference type="Proteomes" id="UP000002494">
    <property type="component" value="Chromosome 10"/>
</dbReference>
<dbReference type="Bgee" id="ENSRNOG00000023881">
    <property type="expression patterns" value="Expressed in thymus and 15 other cell types or tissues"/>
</dbReference>
<dbReference type="GO" id="GO:0005911">
    <property type="term" value="C:cell-cell junction"/>
    <property type="evidence" value="ECO:0000266"/>
    <property type="project" value="RGD"/>
</dbReference>
<dbReference type="GO" id="GO:0005737">
    <property type="term" value="C:cytoplasm"/>
    <property type="evidence" value="ECO:0000266"/>
    <property type="project" value="RGD"/>
</dbReference>
<dbReference type="GO" id="GO:0005829">
    <property type="term" value="C:cytosol"/>
    <property type="evidence" value="ECO:0000266"/>
    <property type="project" value="RGD"/>
</dbReference>
<dbReference type="GO" id="GO:0001772">
    <property type="term" value="C:immunological synapse"/>
    <property type="evidence" value="ECO:0000266"/>
    <property type="project" value="RGD"/>
</dbReference>
<dbReference type="GO" id="GO:0005634">
    <property type="term" value="C:nucleus"/>
    <property type="evidence" value="ECO:0007669"/>
    <property type="project" value="UniProtKB-SubCell"/>
</dbReference>
<dbReference type="GO" id="GO:0005886">
    <property type="term" value="C:plasma membrane"/>
    <property type="evidence" value="ECO:0000266"/>
    <property type="project" value="RGD"/>
</dbReference>
<dbReference type="GO" id="GO:0044853">
    <property type="term" value="C:plasma membrane raft"/>
    <property type="evidence" value="ECO:0000266"/>
    <property type="project" value="RGD"/>
</dbReference>
<dbReference type="GO" id="GO:0032991">
    <property type="term" value="C:protein-containing complex"/>
    <property type="evidence" value="ECO:0000314"/>
    <property type="project" value="UniProtKB"/>
</dbReference>
<dbReference type="GO" id="GO:0042101">
    <property type="term" value="C:T cell receptor complex"/>
    <property type="evidence" value="ECO:0000266"/>
    <property type="project" value="RGD"/>
</dbReference>
<dbReference type="GO" id="GO:0019901">
    <property type="term" value="F:protein kinase binding"/>
    <property type="evidence" value="ECO:0000266"/>
    <property type="project" value="RGD"/>
</dbReference>
<dbReference type="GO" id="GO:0019903">
    <property type="term" value="F:protein phosphatase binding"/>
    <property type="evidence" value="ECO:0000266"/>
    <property type="project" value="RGD"/>
</dbReference>
<dbReference type="GO" id="GO:0044877">
    <property type="term" value="F:protein-containing complex binding"/>
    <property type="evidence" value="ECO:0000353"/>
    <property type="project" value="RGD"/>
</dbReference>
<dbReference type="GO" id="GO:0042169">
    <property type="term" value="F:SH2 domain binding"/>
    <property type="evidence" value="ECO:0000353"/>
    <property type="project" value="RGD"/>
</dbReference>
<dbReference type="GO" id="GO:0002250">
    <property type="term" value="P:adaptive immune response"/>
    <property type="evidence" value="ECO:0007669"/>
    <property type="project" value="UniProtKB-KW"/>
</dbReference>
<dbReference type="GO" id="GO:0002821">
    <property type="term" value="P:positive regulation of adaptive immune response"/>
    <property type="evidence" value="ECO:0000266"/>
    <property type="project" value="RGD"/>
</dbReference>
<dbReference type="GO" id="GO:0045785">
    <property type="term" value="P:positive regulation of cell adhesion"/>
    <property type="evidence" value="ECO:0000266"/>
    <property type="project" value="RGD"/>
</dbReference>
<dbReference type="GO" id="GO:0033634">
    <property type="term" value="P:positive regulation of cell-cell adhesion mediated by integrin"/>
    <property type="evidence" value="ECO:0000266"/>
    <property type="project" value="RGD"/>
</dbReference>
<dbReference type="GO" id="GO:0001954">
    <property type="term" value="P:positive regulation of cell-matrix adhesion"/>
    <property type="evidence" value="ECO:0000266"/>
    <property type="project" value="RGD"/>
</dbReference>
<dbReference type="GO" id="GO:0045893">
    <property type="term" value="P:positive regulation of DNA-templated transcription"/>
    <property type="evidence" value="ECO:0000266"/>
    <property type="project" value="RGD"/>
</dbReference>
<dbReference type="GO" id="GO:0034116">
    <property type="term" value="P:positive regulation of heterotypic cell-cell adhesion"/>
    <property type="evidence" value="ECO:0000266"/>
    <property type="project" value="RGD"/>
</dbReference>
<dbReference type="GO" id="GO:0033625">
    <property type="term" value="P:positive regulation of integrin activation"/>
    <property type="evidence" value="ECO:0000266"/>
    <property type="project" value="RGD"/>
</dbReference>
<dbReference type="GO" id="GO:1903039">
    <property type="term" value="P:positive regulation of leukocyte cell-cell adhesion"/>
    <property type="evidence" value="ECO:0000266"/>
    <property type="project" value="RGD"/>
</dbReference>
<dbReference type="GO" id="GO:0045944">
    <property type="term" value="P:positive regulation of transcription by RNA polymerase II"/>
    <property type="evidence" value="ECO:0000266"/>
    <property type="project" value="RGD"/>
</dbReference>
<dbReference type="GO" id="GO:0072659">
    <property type="term" value="P:protein localization to plasma membrane"/>
    <property type="evidence" value="ECO:0000266"/>
    <property type="project" value="RGD"/>
</dbReference>
<dbReference type="GO" id="GO:0050852">
    <property type="term" value="P:T cell receptor signaling pathway"/>
    <property type="evidence" value="ECO:0000266"/>
    <property type="project" value="RGD"/>
</dbReference>
<dbReference type="CDD" id="cd13380">
    <property type="entry name" value="PH_Skap1"/>
    <property type="match status" value="1"/>
</dbReference>
<dbReference type="CDD" id="cd12044">
    <property type="entry name" value="SH3_SKAP1"/>
    <property type="match status" value="1"/>
</dbReference>
<dbReference type="FunFam" id="2.30.30.40:FF:000097">
    <property type="entry name" value="Putative src kinase-associated phosphoprotein 2"/>
    <property type="match status" value="1"/>
</dbReference>
<dbReference type="FunFam" id="2.30.29.30:FF:000277">
    <property type="entry name" value="src kinase-associated phosphoprotein 1"/>
    <property type="match status" value="1"/>
</dbReference>
<dbReference type="Gene3D" id="6.10.250.220">
    <property type="match status" value="1"/>
</dbReference>
<dbReference type="Gene3D" id="2.30.29.30">
    <property type="entry name" value="Pleckstrin-homology domain (PH domain)/Phosphotyrosine-binding domain (PTB)"/>
    <property type="match status" value="1"/>
</dbReference>
<dbReference type="Gene3D" id="2.30.30.40">
    <property type="entry name" value="SH3 Domains"/>
    <property type="match status" value="1"/>
</dbReference>
<dbReference type="InterPro" id="IPR011993">
    <property type="entry name" value="PH-like_dom_sf"/>
</dbReference>
<dbReference type="InterPro" id="IPR001849">
    <property type="entry name" value="PH_domain"/>
</dbReference>
<dbReference type="InterPro" id="IPR036028">
    <property type="entry name" value="SH3-like_dom_sf"/>
</dbReference>
<dbReference type="InterPro" id="IPR001452">
    <property type="entry name" value="SH3_domain"/>
</dbReference>
<dbReference type="InterPro" id="IPR035765">
    <property type="entry name" value="SKAP1_SH3"/>
</dbReference>
<dbReference type="InterPro" id="IPR037781">
    <property type="entry name" value="SKAP_fam"/>
</dbReference>
<dbReference type="PANTHER" id="PTHR15129:SF1">
    <property type="entry name" value="SRC KINASE-ASSOCIATED PHOSPHOPROTEIN 1"/>
    <property type="match status" value="1"/>
</dbReference>
<dbReference type="PANTHER" id="PTHR15129">
    <property type="entry name" value="SRC-ASSOCIATED ADAPTOR PROTEIN"/>
    <property type="match status" value="1"/>
</dbReference>
<dbReference type="Pfam" id="PF00169">
    <property type="entry name" value="PH"/>
    <property type="match status" value="1"/>
</dbReference>
<dbReference type="Pfam" id="PF00018">
    <property type="entry name" value="SH3_1"/>
    <property type="match status" value="1"/>
</dbReference>
<dbReference type="PRINTS" id="PR00452">
    <property type="entry name" value="SH3DOMAIN"/>
</dbReference>
<dbReference type="SMART" id="SM00233">
    <property type="entry name" value="PH"/>
    <property type="match status" value="1"/>
</dbReference>
<dbReference type="SMART" id="SM00326">
    <property type="entry name" value="SH3"/>
    <property type="match status" value="1"/>
</dbReference>
<dbReference type="SUPFAM" id="SSF50729">
    <property type="entry name" value="PH domain-like"/>
    <property type="match status" value="1"/>
</dbReference>
<dbReference type="SUPFAM" id="SSF50044">
    <property type="entry name" value="SH3-domain"/>
    <property type="match status" value="1"/>
</dbReference>
<dbReference type="PROSITE" id="PS50003">
    <property type="entry name" value="PH_DOMAIN"/>
    <property type="match status" value="1"/>
</dbReference>
<dbReference type="PROSITE" id="PS50002">
    <property type="entry name" value="SH3"/>
    <property type="match status" value="1"/>
</dbReference>
<name>SKAP1_RAT</name>
<organism>
    <name type="scientific">Rattus norvegicus</name>
    <name type="common">Rat</name>
    <dbReference type="NCBI Taxonomy" id="10116"/>
    <lineage>
        <taxon>Eukaryota</taxon>
        <taxon>Metazoa</taxon>
        <taxon>Chordata</taxon>
        <taxon>Craniata</taxon>
        <taxon>Vertebrata</taxon>
        <taxon>Euteleostomi</taxon>
        <taxon>Mammalia</taxon>
        <taxon>Eutheria</taxon>
        <taxon>Euarchontoglires</taxon>
        <taxon>Glires</taxon>
        <taxon>Rodentia</taxon>
        <taxon>Myomorpha</taxon>
        <taxon>Muroidea</taxon>
        <taxon>Muridae</taxon>
        <taxon>Murinae</taxon>
        <taxon>Rattus</taxon>
    </lineage>
</organism>
<evidence type="ECO:0000250" key="1"/>
<evidence type="ECO:0000250" key="2">
    <source>
        <dbReference type="UniProtKB" id="Q3UUV5"/>
    </source>
</evidence>
<evidence type="ECO:0000250" key="3">
    <source>
        <dbReference type="UniProtKB" id="Q86WV1"/>
    </source>
</evidence>
<evidence type="ECO:0000255" key="4">
    <source>
        <dbReference type="PROSITE-ProRule" id="PRU00145"/>
    </source>
</evidence>
<evidence type="ECO:0000255" key="5">
    <source>
        <dbReference type="PROSITE-ProRule" id="PRU00192"/>
    </source>
</evidence>
<evidence type="ECO:0000269" key="6">
    <source>
    </source>
</evidence>
<evidence type="ECO:0000269" key="7">
    <source>
    </source>
</evidence>
<evidence type="ECO:0000305" key="8"/>
<reference key="1">
    <citation type="journal article" date="2003" name="FEBS Lett.">
        <title>Targeting of MIST to Src-family kinases via SKAP55-SLAP-130 adaptor complex in mast cells(1).</title>
        <authorList>
            <person name="Fujii Y."/>
            <person name="Wakahara S."/>
            <person name="Nakao T."/>
            <person name="Hara T."/>
            <person name="Ohtake H."/>
            <person name="Komurasaki T."/>
            <person name="Kitamura K."/>
            <person name="Tatsuno A."/>
            <person name="Fujiwara N."/>
            <person name="Hozumi N."/>
            <person name="Ra C."/>
            <person name="Kitamura D."/>
            <person name="Goitsuka R."/>
        </authorList>
    </citation>
    <scope>NUCLEOTIDE SEQUENCE [MRNA]</scope>
    <scope>PROTEIN SEQUENCE OF 120-129; 138-147; 177-186 AND 344-352</scope>
    <scope>FUNCTION</scope>
    <scope>INTERACTION WITH FYB1</scope>
    <scope>IDENTIFICATION IN A COMPLEX WITH FYB1 AND CLNK</scope>
</reference>
<reference key="2">
    <citation type="journal article" date="2004" name="Genome Res.">
        <title>The status, quality, and expansion of the NIH full-length cDNA project: the Mammalian Gene Collection (MGC).</title>
        <authorList>
            <consortium name="The MGC Project Team"/>
        </authorList>
    </citation>
    <scope>NUCLEOTIDE SEQUENCE [LARGE SCALE MRNA]</scope>
    <source>
        <tissue>Thymus</tissue>
    </source>
</reference>
<reference key="3">
    <citation type="journal article" date="2004" name="Mol. Cell. Biol.">
        <title>Immune functions in mice lacking Clnk, an SLP-76-related adaptor expressed in a subset of immune cells.</title>
        <authorList>
            <person name="Utting O."/>
            <person name="Sedgmen B.J."/>
            <person name="Watts T.H."/>
            <person name="Shi X."/>
            <person name="Rottapel R."/>
            <person name="Iulianella A."/>
            <person name="Lohnes D."/>
            <person name="Veillette A."/>
        </authorList>
    </citation>
    <scope>IDENTIFICATION BY MASS SPECTROMETRY</scope>
    <scope>TISSUE SPECIFICITY</scope>
</reference>
<keyword id="KW-1064">Adaptive immunity</keyword>
<keyword id="KW-1003">Cell membrane</keyword>
<keyword id="KW-0963">Cytoplasm</keyword>
<keyword id="KW-0903">Direct protein sequencing</keyword>
<keyword id="KW-0391">Immunity</keyword>
<keyword id="KW-0472">Membrane</keyword>
<keyword id="KW-0539">Nucleus</keyword>
<keyword id="KW-0597">Phosphoprotein</keyword>
<keyword id="KW-1185">Reference proteome</keyword>
<keyword id="KW-0728">SH3 domain</keyword>
<gene>
    <name type="primary">Skap1</name>
    <name type="synonym">Scap1</name>
    <name type="synonym">Skap55</name>
</gene>
<proteinExistence type="evidence at protein level"/>
<accession>Q4V7G1</accession>
<accession>Q8CHI6</accession>
<sequence length="354" mass="40903">MQAIALPEEICWLLEDAEDFLAEGLQNENLSPGAQDQRDHILRGFQQIKSRYCWDFQPQGDDLGQDGSDENLSGTHGPALASDASFWSDYQEEGIDDIIRGAQELDNVIKQGYLEKKSKDHSFFGSEWQKRWCVISRGLFLYYANEKSKQPKGTFLIKGYNVRMAPHLRKDSKKDSCFELTSQDRRSYEFTAFSPAEARDWVDQISFLLKDLSSLTIPFEEEEEEEEEDKEQEEMYNDIDGFDSARSGSQGRAMALPEPLDKEEDVYEVLPDEDDLEEDACGAHRRRVDYADYYQGLWDCHGDQPDELSFQRGDLIRILSKEYNMYGWWVGELNSIIGIVPKDYLTTAFEMEGR</sequence>
<comment type="function">
    <text evidence="3 6">Positively regulates T-cell receptor signaling by enhancing the MAP kinase pathway (By similarity). Required for optimal conjugation between T-cells and antigen-presenting cells by promoting the clustering of integrin ITGAL on the surface of T-cells (By similarity). May be involved in high affinity immunoglobulin epsilon receptor signaling in mast cells (PubMed:12681493).</text>
</comment>
<comment type="subunit">
    <text evidence="3 6">Homodimer (By similarity). Interacts with FYN (By similarity). Interacts with PTPRC (By similarity). Interacts with GRB2 when phosphorylated on Tyr-267 (By similarity). Interacts with FYB1, which is required for SKAP2 protein stability (By similarity). Part of a complex consisting of SKAP1, FYB1 and CLNK (PubMed:12681493). Interacts with RASGRP1 (By similarity). Interacts with FYB2 (By similarity).</text>
</comment>
<comment type="subcellular location">
    <subcellularLocation>
        <location evidence="3">Cytoplasm</location>
    </subcellularLocation>
    <subcellularLocation>
        <location evidence="3">Nucleus</location>
    </subcellularLocation>
    <subcellularLocation>
        <location evidence="3">Cell membrane</location>
    </subcellularLocation>
    <text evidence="3">Upon T-cell stimulation, translocates to lipid rafts at the cell membrane.</text>
</comment>
<comment type="tissue specificity">
    <text evidence="7">Expressed in mast cells (at protein level).</text>
</comment>
<comment type="domain">
    <text evidence="3">The SH3 domain interacts with FYB1.</text>
</comment>
<comment type="PTM">
    <text evidence="3">Phosphorylated on tyrosines. Phosphorylation by FYN on Tyr-267 is required for GRB2 interaction (By similarity). Phosphorylation by FYN on Tyr-290 abolishes interaction with FYB1. Tyr-236 is dephosphorylated by PTPRC (By similarity).</text>
</comment>
<comment type="similarity">
    <text evidence="8">Belongs to the SKAP family.</text>
</comment>
<protein>
    <recommendedName>
        <fullName>Src kinase-associated phosphoprotein 1</fullName>
    </recommendedName>
    <alternativeName>
        <fullName>SKAP55 adapter protein</fullName>
    </alternativeName>
    <alternativeName>
        <fullName>Src family-associated phosphoprotein 1</fullName>
    </alternativeName>
    <alternativeName>
        <fullName>Src kinase-associated phosphoprotein of 55 kDa</fullName>
        <shortName>SKAP-55</shortName>
    </alternativeName>
    <alternativeName>
        <fullName>pp55</fullName>
    </alternativeName>
</protein>